<reference key="1">
    <citation type="journal article" date="1998" name="Nucleic Acids Res.">
        <title>The complete DNA sequence and analysis of the large virulence plasmid of Escherichia coli O157:H7.</title>
        <authorList>
            <person name="Burland V."/>
            <person name="Shao Y."/>
            <person name="Perna N.T."/>
            <person name="Plunkett G. III"/>
            <person name="Sofia H.J."/>
            <person name="Blattner F.R."/>
        </authorList>
    </citation>
    <scope>NUCLEOTIDE SEQUENCE [LARGE SCALE GENOMIC DNA]</scope>
    <source>
        <strain>O157:H7 / EDL933 / ATCC 700927 / EHEC</strain>
    </source>
</reference>
<reference key="2">
    <citation type="journal article" date="1998" name="DNA Res.">
        <title>Complete nucleotide sequences of 93-kb and 3.3-kb plasmids of an enterohemorrhagic Escherichia coli O157:H7 derived from Sakai outbreak.</title>
        <authorList>
            <person name="Makino K."/>
            <person name="Ishii K."/>
            <person name="Yasunaga T."/>
            <person name="Hattori M."/>
            <person name="Yokoyama K."/>
            <person name="Yatsudo H.C."/>
            <person name="Kubota Y."/>
            <person name="Yamaichi Y."/>
            <person name="Iida T."/>
            <person name="Yamamoto K."/>
            <person name="Honda T."/>
            <person name="Han C.G."/>
            <person name="Ohtsubo A."/>
            <person name="Kasamatsu M."/>
            <person name="Hayashi T."/>
            <person name="Kuhara S."/>
            <person name="Shinagawa H."/>
        </authorList>
    </citation>
    <scope>NUCLEOTIDE SEQUENCE [LARGE SCALE GENOMIC DNA]</scope>
    <source>
        <strain>O157:H7 / Sakai / RIMD 0509952 / EHEC</strain>
    </source>
</reference>
<feature type="chain" id="PRO_0000268744" description="UPF0401 protein YubL">
    <location>
        <begin position="1"/>
        <end position="79"/>
    </location>
</feature>
<keyword id="KW-0614">Plasmid</keyword>
<keyword id="KW-1185">Reference proteome</keyword>
<protein>
    <recommendedName>
        <fullName>UPF0401 protein YubL</fullName>
    </recommendedName>
</protein>
<name>YUBL_ECO57</name>
<gene>
    <name type="primary">yubL</name>
    <name type="ordered locus">L7085</name>
    <name type="ordered locus">ECO57PM49.1</name>
</gene>
<accession>Q9ZGR9</accession>
<organism>
    <name type="scientific">Escherichia coli O157:H7</name>
    <dbReference type="NCBI Taxonomy" id="83334"/>
    <lineage>
        <taxon>Bacteria</taxon>
        <taxon>Pseudomonadati</taxon>
        <taxon>Pseudomonadota</taxon>
        <taxon>Gammaproteobacteria</taxon>
        <taxon>Enterobacterales</taxon>
        <taxon>Enterobacteriaceae</taxon>
        <taxon>Escherichia</taxon>
    </lineage>
</organism>
<geneLocation type="plasmid">
    <name>pO157</name>
</geneLocation>
<proteinExistence type="inferred from homology"/>
<evidence type="ECO:0000305" key="1"/>
<sequence>MRMSEYFRILQGLPDGPFTRKHAEAVAAQYRNVFIENDHGEQFRLVVRNNGAMVWRTWNFEDGAGYWMNHVIRDFGIIK</sequence>
<dbReference type="EMBL" id="AF074613">
    <property type="protein sequence ID" value="AAC70153.1"/>
    <property type="status" value="ALT_INIT"/>
    <property type="molecule type" value="Genomic_DNA"/>
</dbReference>
<dbReference type="EMBL" id="AB011549">
    <property type="status" value="NOT_ANNOTATED_CDS"/>
    <property type="molecule type" value="Genomic_DNA"/>
</dbReference>
<dbReference type="PIR" id="T42185">
    <property type="entry name" value="T42185"/>
</dbReference>
<dbReference type="SMR" id="Q9ZGR9"/>
<dbReference type="KEGG" id="ece:Z_L7085"/>
<dbReference type="eggNOG" id="ENOG5030U7R">
    <property type="taxonomic scope" value="Bacteria"/>
</dbReference>
<dbReference type="Proteomes" id="UP000000558">
    <property type="component" value="Plasmid pO157"/>
</dbReference>
<dbReference type="Proteomes" id="UP000002519">
    <property type="component" value="Plasmid pO157"/>
</dbReference>
<dbReference type="Gene3D" id="3.30.160.130">
    <property type="entry name" value="ykff protein like domains"/>
    <property type="match status" value="1"/>
</dbReference>
<dbReference type="InterPro" id="IPR009253">
    <property type="entry name" value="DUF905"/>
</dbReference>
<dbReference type="InterPro" id="IPR038612">
    <property type="entry name" value="YkfF-like_sf"/>
</dbReference>
<dbReference type="Pfam" id="PF06006">
    <property type="entry name" value="DUF905"/>
    <property type="match status" value="1"/>
</dbReference>
<dbReference type="SUPFAM" id="SSF54786">
    <property type="entry name" value="YcfA/nrd intein domain"/>
    <property type="match status" value="1"/>
</dbReference>
<comment type="similarity">
    <text evidence="1">Belongs to the UPF0401 family.</text>
</comment>
<comment type="sequence caution" evidence="1">
    <conflict type="erroneous initiation">
        <sequence resource="EMBL-CDS" id="AAC70153"/>
    </conflict>
</comment>